<organism>
    <name type="scientific">Photobacterium profundum (strain SS9)</name>
    <dbReference type="NCBI Taxonomy" id="298386"/>
    <lineage>
        <taxon>Bacteria</taxon>
        <taxon>Pseudomonadati</taxon>
        <taxon>Pseudomonadota</taxon>
        <taxon>Gammaproteobacteria</taxon>
        <taxon>Vibrionales</taxon>
        <taxon>Vibrionaceae</taxon>
        <taxon>Photobacterium</taxon>
    </lineage>
</organism>
<evidence type="ECO:0000255" key="1">
    <source>
        <dbReference type="HAMAP-Rule" id="MF_00440"/>
    </source>
</evidence>
<dbReference type="EMBL" id="CR378665">
    <property type="protein sequence ID" value="CAG19209.1"/>
    <property type="molecule type" value="Genomic_DNA"/>
</dbReference>
<dbReference type="RefSeq" id="WP_011217550.1">
    <property type="nucleotide sequence ID" value="NC_006370.1"/>
</dbReference>
<dbReference type="SMR" id="Q6LU16"/>
<dbReference type="STRING" id="298386.PBPRA0796"/>
<dbReference type="KEGG" id="ppr:PBPRA0796"/>
<dbReference type="eggNOG" id="COG1327">
    <property type="taxonomic scope" value="Bacteria"/>
</dbReference>
<dbReference type="HOGENOM" id="CLU_108412_0_0_6"/>
<dbReference type="Proteomes" id="UP000000593">
    <property type="component" value="Chromosome 1"/>
</dbReference>
<dbReference type="GO" id="GO:0005524">
    <property type="term" value="F:ATP binding"/>
    <property type="evidence" value="ECO:0007669"/>
    <property type="project" value="UniProtKB-KW"/>
</dbReference>
<dbReference type="GO" id="GO:0003677">
    <property type="term" value="F:DNA binding"/>
    <property type="evidence" value="ECO:0007669"/>
    <property type="project" value="UniProtKB-KW"/>
</dbReference>
<dbReference type="GO" id="GO:0008270">
    <property type="term" value="F:zinc ion binding"/>
    <property type="evidence" value="ECO:0007669"/>
    <property type="project" value="UniProtKB-UniRule"/>
</dbReference>
<dbReference type="GO" id="GO:0045892">
    <property type="term" value="P:negative regulation of DNA-templated transcription"/>
    <property type="evidence" value="ECO:0007669"/>
    <property type="project" value="UniProtKB-UniRule"/>
</dbReference>
<dbReference type="HAMAP" id="MF_00440">
    <property type="entry name" value="NrdR"/>
    <property type="match status" value="1"/>
</dbReference>
<dbReference type="InterPro" id="IPR005144">
    <property type="entry name" value="ATP-cone_dom"/>
</dbReference>
<dbReference type="InterPro" id="IPR055173">
    <property type="entry name" value="NrdR-like_N"/>
</dbReference>
<dbReference type="InterPro" id="IPR003796">
    <property type="entry name" value="RNR_NrdR-like"/>
</dbReference>
<dbReference type="NCBIfam" id="TIGR00244">
    <property type="entry name" value="transcriptional regulator NrdR"/>
    <property type="match status" value="1"/>
</dbReference>
<dbReference type="PANTHER" id="PTHR30455">
    <property type="entry name" value="TRANSCRIPTIONAL REPRESSOR NRDR"/>
    <property type="match status" value="1"/>
</dbReference>
<dbReference type="PANTHER" id="PTHR30455:SF2">
    <property type="entry name" value="TRANSCRIPTIONAL REPRESSOR NRDR"/>
    <property type="match status" value="1"/>
</dbReference>
<dbReference type="Pfam" id="PF03477">
    <property type="entry name" value="ATP-cone"/>
    <property type="match status" value="1"/>
</dbReference>
<dbReference type="Pfam" id="PF22811">
    <property type="entry name" value="Zn_ribbon_NrdR"/>
    <property type="match status" value="1"/>
</dbReference>
<dbReference type="PROSITE" id="PS51161">
    <property type="entry name" value="ATP_CONE"/>
    <property type="match status" value="1"/>
</dbReference>
<gene>
    <name evidence="1" type="primary">nrdR</name>
    <name type="ordered locus">PBPRA0796</name>
</gene>
<comment type="function">
    <text evidence="1">Negatively regulates transcription of bacterial ribonucleotide reductase nrd genes and operons by binding to NrdR-boxes.</text>
</comment>
<comment type="cofactor">
    <cofactor evidence="1">
        <name>Zn(2+)</name>
        <dbReference type="ChEBI" id="CHEBI:29105"/>
    </cofactor>
    <text evidence="1">Binds 1 zinc ion.</text>
</comment>
<comment type="similarity">
    <text evidence="1">Belongs to the NrdR family.</text>
</comment>
<protein>
    <recommendedName>
        <fullName evidence="1">Transcriptional repressor NrdR</fullName>
    </recommendedName>
</protein>
<accession>Q6LU16</accession>
<feature type="chain" id="PRO_0000182328" description="Transcriptional repressor NrdR">
    <location>
        <begin position="1"/>
        <end position="149"/>
    </location>
</feature>
<feature type="domain" description="ATP-cone" evidence="1">
    <location>
        <begin position="49"/>
        <end position="139"/>
    </location>
</feature>
<feature type="zinc finger region" evidence="1">
    <location>
        <begin position="3"/>
        <end position="34"/>
    </location>
</feature>
<name>NRDR_PHOPR</name>
<proteinExistence type="inferred from homology"/>
<keyword id="KW-0067">ATP-binding</keyword>
<keyword id="KW-0238">DNA-binding</keyword>
<keyword id="KW-0479">Metal-binding</keyword>
<keyword id="KW-0547">Nucleotide-binding</keyword>
<keyword id="KW-1185">Reference proteome</keyword>
<keyword id="KW-0678">Repressor</keyword>
<keyword id="KW-0804">Transcription</keyword>
<keyword id="KW-0805">Transcription regulation</keyword>
<keyword id="KW-0862">Zinc</keyword>
<keyword id="KW-0863">Zinc-finger</keyword>
<sequence>MHCPFCGANDTKVIDSRLVADGHQVRRRRQCLACNERYTTFETAELVMPRVIKTDGNRDSFNEDKLRGGIQRALEKRPVSADDIERAINTIKSRLRATGEREVPSDMIGNLVMEALKELDKVAYIRFASVYRSFEDIREFGEEIAKLEK</sequence>
<reference key="1">
    <citation type="journal article" date="2005" name="Science">
        <title>Life at depth: Photobacterium profundum genome sequence and expression analysis.</title>
        <authorList>
            <person name="Vezzi A."/>
            <person name="Campanaro S."/>
            <person name="D'Angelo M."/>
            <person name="Simonato F."/>
            <person name="Vitulo N."/>
            <person name="Lauro F.M."/>
            <person name="Cestaro A."/>
            <person name="Malacrida G."/>
            <person name="Simionati B."/>
            <person name="Cannata N."/>
            <person name="Romualdi C."/>
            <person name="Bartlett D.H."/>
            <person name="Valle G."/>
        </authorList>
    </citation>
    <scope>NUCLEOTIDE SEQUENCE [LARGE SCALE GENOMIC DNA]</scope>
    <source>
        <strain>ATCC BAA-1253 / SS9</strain>
    </source>
</reference>